<keyword id="KW-1185">Reference proteome</keyword>
<keyword id="KW-0687">Ribonucleoprotein</keyword>
<keyword id="KW-0689">Ribosomal protein</keyword>
<proteinExistence type="inferred from homology"/>
<evidence type="ECO:0000255" key="1">
    <source>
        <dbReference type="HAMAP-Rule" id="MF_00402"/>
    </source>
</evidence>
<evidence type="ECO:0000305" key="2"/>
<feature type="chain" id="PRO_0000226876" description="Large ribosomal subunit protein bL19">
    <location>
        <begin position="1"/>
        <end position="116"/>
    </location>
</feature>
<reference key="1">
    <citation type="journal article" date="2005" name="Proc. Natl. Acad. Sci. U.S.A.">
        <title>Whole genome sequence of Staphylococcus saprophyticus reveals the pathogenesis of uncomplicated urinary tract infection.</title>
        <authorList>
            <person name="Kuroda M."/>
            <person name="Yamashita A."/>
            <person name="Hirakawa H."/>
            <person name="Kumano M."/>
            <person name="Morikawa K."/>
            <person name="Higashide M."/>
            <person name="Maruyama A."/>
            <person name="Inose Y."/>
            <person name="Matoba K."/>
            <person name="Toh H."/>
            <person name="Kuhara S."/>
            <person name="Hattori M."/>
            <person name="Ohta T."/>
        </authorList>
    </citation>
    <scope>NUCLEOTIDE SEQUENCE [LARGE SCALE GENOMIC DNA]</scope>
    <source>
        <strain>ATCC 15305 / DSM 20229 / NCIMB 8711 / NCTC 7292 / S-41</strain>
    </source>
</reference>
<dbReference type="EMBL" id="AP008934">
    <property type="protein sequence ID" value="BAE18671.1"/>
    <property type="molecule type" value="Genomic_DNA"/>
</dbReference>
<dbReference type="RefSeq" id="WP_011303276.1">
    <property type="nucleotide sequence ID" value="NZ_MTGA01000034.1"/>
</dbReference>
<dbReference type="SMR" id="Q49X27"/>
<dbReference type="GeneID" id="79050596"/>
<dbReference type="KEGG" id="ssp:SSP1526"/>
<dbReference type="PATRIC" id="fig|342451.11.peg.1528"/>
<dbReference type="eggNOG" id="COG0335">
    <property type="taxonomic scope" value="Bacteria"/>
</dbReference>
<dbReference type="HOGENOM" id="CLU_103507_2_1_9"/>
<dbReference type="OrthoDB" id="9803541at2"/>
<dbReference type="Proteomes" id="UP000006371">
    <property type="component" value="Chromosome"/>
</dbReference>
<dbReference type="GO" id="GO:0022625">
    <property type="term" value="C:cytosolic large ribosomal subunit"/>
    <property type="evidence" value="ECO:0007669"/>
    <property type="project" value="TreeGrafter"/>
</dbReference>
<dbReference type="GO" id="GO:0003735">
    <property type="term" value="F:structural constituent of ribosome"/>
    <property type="evidence" value="ECO:0007669"/>
    <property type="project" value="InterPro"/>
</dbReference>
<dbReference type="GO" id="GO:0006412">
    <property type="term" value="P:translation"/>
    <property type="evidence" value="ECO:0007669"/>
    <property type="project" value="UniProtKB-UniRule"/>
</dbReference>
<dbReference type="FunFam" id="2.30.30.790:FF:000001">
    <property type="entry name" value="50S ribosomal protein L19"/>
    <property type="match status" value="1"/>
</dbReference>
<dbReference type="Gene3D" id="2.30.30.790">
    <property type="match status" value="1"/>
</dbReference>
<dbReference type="HAMAP" id="MF_00402">
    <property type="entry name" value="Ribosomal_bL19"/>
    <property type="match status" value="1"/>
</dbReference>
<dbReference type="InterPro" id="IPR001857">
    <property type="entry name" value="Ribosomal_bL19"/>
</dbReference>
<dbReference type="InterPro" id="IPR018257">
    <property type="entry name" value="Ribosomal_bL19_CS"/>
</dbReference>
<dbReference type="InterPro" id="IPR038657">
    <property type="entry name" value="Ribosomal_bL19_sf"/>
</dbReference>
<dbReference type="InterPro" id="IPR008991">
    <property type="entry name" value="Translation_prot_SH3-like_sf"/>
</dbReference>
<dbReference type="NCBIfam" id="TIGR01024">
    <property type="entry name" value="rplS_bact"/>
    <property type="match status" value="1"/>
</dbReference>
<dbReference type="PANTHER" id="PTHR15680:SF9">
    <property type="entry name" value="LARGE RIBOSOMAL SUBUNIT PROTEIN BL19M"/>
    <property type="match status" value="1"/>
</dbReference>
<dbReference type="PANTHER" id="PTHR15680">
    <property type="entry name" value="RIBOSOMAL PROTEIN L19"/>
    <property type="match status" value="1"/>
</dbReference>
<dbReference type="Pfam" id="PF01245">
    <property type="entry name" value="Ribosomal_L19"/>
    <property type="match status" value="1"/>
</dbReference>
<dbReference type="PIRSF" id="PIRSF002191">
    <property type="entry name" value="Ribosomal_L19"/>
    <property type="match status" value="1"/>
</dbReference>
<dbReference type="PRINTS" id="PR00061">
    <property type="entry name" value="RIBOSOMALL19"/>
</dbReference>
<dbReference type="SUPFAM" id="SSF50104">
    <property type="entry name" value="Translation proteins SH3-like domain"/>
    <property type="match status" value="1"/>
</dbReference>
<dbReference type="PROSITE" id="PS01015">
    <property type="entry name" value="RIBOSOMAL_L19"/>
    <property type="match status" value="1"/>
</dbReference>
<protein>
    <recommendedName>
        <fullName evidence="1">Large ribosomal subunit protein bL19</fullName>
    </recommendedName>
    <alternativeName>
        <fullName evidence="2">50S ribosomal protein L19</fullName>
    </alternativeName>
</protein>
<organism>
    <name type="scientific">Staphylococcus saprophyticus subsp. saprophyticus (strain ATCC 15305 / DSM 20229 / NCIMB 8711 / NCTC 7292 / S-41)</name>
    <dbReference type="NCBI Taxonomy" id="342451"/>
    <lineage>
        <taxon>Bacteria</taxon>
        <taxon>Bacillati</taxon>
        <taxon>Bacillota</taxon>
        <taxon>Bacilli</taxon>
        <taxon>Bacillales</taxon>
        <taxon>Staphylococcaceae</taxon>
        <taxon>Staphylococcus</taxon>
    </lineage>
</organism>
<comment type="function">
    <text evidence="1">This protein is located at the 30S-50S ribosomal subunit interface and may play a role in the structure and function of the aminoacyl-tRNA binding site.</text>
</comment>
<comment type="similarity">
    <text evidence="1">Belongs to the bacterial ribosomal protein bL19 family.</text>
</comment>
<accession>Q49X27</accession>
<sequence length="116" mass="13335">MSNHKLIEAVTQSQLRTDLPSFRPGDTLKVHVRIIEGTRERIQVFEGVVIKRRGGGISETFTVRKISSGVGVERTFPLHTPKIEKIEVSRRGKVRRAKLYYLRELRGKAARIKEIR</sequence>
<gene>
    <name evidence="1" type="primary">rplS</name>
    <name type="ordered locus">SSP1526</name>
</gene>
<name>RL19_STAS1</name>